<name>Y1790_RHOPB</name>
<gene>
    <name type="ordered locus">RPC_1790</name>
</gene>
<feature type="chain" id="PRO_1000044808" description="UPF0260 protein RPC_1790">
    <location>
        <begin position="1"/>
        <end position="170"/>
    </location>
</feature>
<evidence type="ECO:0000255" key="1">
    <source>
        <dbReference type="HAMAP-Rule" id="MF_00676"/>
    </source>
</evidence>
<sequence>MTAPAKKPSAQEGLFWKTKTLEQMSGPEWESLCDGCARCCLEKLEDEDSGKIYFTHVSCRLLDAGLCGCKDYANRSDQVPDCVRLDPANVRTLNWLPPSCAYKLVAEGRDLYWWHPLISGDPNTVHEAGVSVRGRVQGTELDVNDEHLEQHIVQWPGLLPKRARLKKRPA</sequence>
<proteinExistence type="inferred from homology"/>
<comment type="similarity">
    <text evidence="1">Belongs to the UPF0260 family.</text>
</comment>
<protein>
    <recommendedName>
        <fullName evidence="1">UPF0260 protein RPC_1790</fullName>
    </recommendedName>
</protein>
<organism>
    <name type="scientific">Rhodopseudomonas palustris (strain BisB18)</name>
    <dbReference type="NCBI Taxonomy" id="316056"/>
    <lineage>
        <taxon>Bacteria</taxon>
        <taxon>Pseudomonadati</taxon>
        <taxon>Pseudomonadota</taxon>
        <taxon>Alphaproteobacteria</taxon>
        <taxon>Hyphomicrobiales</taxon>
        <taxon>Nitrobacteraceae</taxon>
        <taxon>Rhodopseudomonas</taxon>
    </lineage>
</organism>
<reference key="1">
    <citation type="submission" date="2006-03" db="EMBL/GenBank/DDBJ databases">
        <title>Complete sequence of Rhodopseudomonas palustris BisB18.</title>
        <authorList>
            <consortium name="US DOE Joint Genome Institute"/>
            <person name="Copeland A."/>
            <person name="Lucas S."/>
            <person name="Lapidus A."/>
            <person name="Barry K."/>
            <person name="Detter J.C."/>
            <person name="Glavina del Rio T."/>
            <person name="Hammon N."/>
            <person name="Israni S."/>
            <person name="Dalin E."/>
            <person name="Tice H."/>
            <person name="Pitluck S."/>
            <person name="Chain P."/>
            <person name="Malfatti S."/>
            <person name="Shin M."/>
            <person name="Vergez L."/>
            <person name="Schmutz J."/>
            <person name="Larimer F."/>
            <person name="Land M."/>
            <person name="Hauser L."/>
            <person name="Pelletier D.A."/>
            <person name="Kyrpides N."/>
            <person name="Anderson I."/>
            <person name="Oda Y."/>
            <person name="Harwood C.S."/>
            <person name="Richardson P."/>
        </authorList>
    </citation>
    <scope>NUCLEOTIDE SEQUENCE [LARGE SCALE GENOMIC DNA]</scope>
    <source>
        <strain>BisB18</strain>
    </source>
</reference>
<accession>Q217T7</accession>
<dbReference type="EMBL" id="CP000301">
    <property type="protein sequence ID" value="ABD87349.1"/>
    <property type="molecule type" value="Genomic_DNA"/>
</dbReference>
<dbReference type="STRING" id="316056.RPC_1790"/>
<dbReference type="KEGG" id="rpc:RPC_1790"/>
<dbReference type="eggNOG" id="COG2983">
    <property type="taxonomic scope" value="Bacteria"/>
</dbReference>
<dbReference type="HOGENOM" id="CLU_109769_0_1_5"/>
<dbReference type="OrthoDB" id="9786855at2"/>
<dbReference type="HAMAP" id="MF_00676">
    <property type="entry name" value="UPF0260"/>
    <property type="match status" value="1"/>
</dbReference>
<dbReference type="InterPro" id="IPR005358">
    <property type="entry name" value="Puta_zinc/iron-chelating_dom"/>
</dbReference>
<dbReference type="InterPro" id="IPR008228">
    <property type="entry name" value="UCP006173"/>
</dbReference>
<dbReference type="NCBIfam" id="NF003501">
    <property type="entry name" value="PRK05170.1-5"/>
    <property type="match status" value="1"/>
</dbReference>
<dbReference type="NCBIfam" id="NF003507">
    <property type="entry name" value="PRK05170.2-5"/>
    <property type="match status" value="1"/>
</dbReference>
<dbReference type="PANTHER" id="PTHR37421">
    <property type="entry name" value="UPF0260 PROTEIN YCGN"/>
    <property type="match status" value="1"/>
</dbReference>
<dbReference type="PANTHER" id="PTHR37421:SF1">
    <property type="entry name" value="UPF0260 PROTEIN YCGN"/>
    <property type="match status" value="1"/>
</dbReference>
<dbReference type="Pfam" id="PF03692">
    <property type="entry name" value="CxxCxxCC"/>
    <property type="match status" value="1"/>
</dbReference>
<dbReference type="PIRSF" id="PIRSF006173">
    <property type="entry name" value="UCP006173"/>
    <property type="match status" value="1"/>
</dbReference>